<proteinExistence type="inferred from homology"/>
<organism>
    <name type="scientific">Rickettsia rickettsii</name>
    <dbReference type="NCBI Taxonomy" id="783"/>
    <lineage>
        <taxon>Bacteria</taxon>
        <taxon>Pseudomonadati</taxon>
        <taxon>Pseudomonadota</taxon>
        <taxon>Alphaproteobacteria</taxon>
        <taxon>Rickettsiales</taxon>
        <taxon>Rickettsiaceae</taxon>
        <taxon>Rickettsieae</taxon>
        <taxon>Rickettsia</taxon>
        <taxon>spotted fever group</taxon>
    </lineage>
</organism>
<accession>Q9AKJ8</accession>
<sequence>MTEYKKVIAQNKKALFHYFIEERLEAGIVLKGSEVRSLRQGKASIEESHAADTGHEVFLYNCHIAEYEKANRFNHATRRPRKLLLHTKEIKKIIGRIRIKGYTLVALSMYFNKKNKVKVELGIAKGKKLHDKRESIKEKDWKRDQSRLIRQK</sequence>
<reference key="1">
    <citation type="journal article" date="2001" name="Mol. Biol. Evol.">
        <title>Pseudogenes, junk DNA, and the dynamics of Rickettsia genomes.</title>
        <authorList>
            <person name="Andersson J.O."/>
            <person name="Andersson S.G.E."/>
        </authorList>
    </citation>
    <scope>NUCLEOTIDE SEQUENCE [GENOMIC DNA]</scope>
    <source>
        <strain>84-21C</strain>
    </source>
</reference>
<comment type="function">
    <text evidence="1">Required for rescue of stalled ribosomes mediated by trans-translation. Binds to transfer-messenger RNA (tmRNA), required for stable association of tmRNA with ribosomes. tmRNA and SmpB together mimic tRNA shape, replacing the anticodon stem-loop with SmpB. tmRNA is encoded by the ssrA gene; the 2 termini fold to resemble tRNA(Ala) and it encodes a 'tag peptide', a short internal open reading frame. During trans-translation Ala-aminoacylated tmRNA acts like a tRNA, entering the A-site of stalled ribosomes, displacing the stalled mRNA. The ribosome then switches to translate the ORF on the tmRNA; the nascent peptide is terminated with the 'tag peptide' encoded by the tmRNA and targeted for degradation. The ribosome is freed to recommence translation, which seems to be the essential function of trans-translation.</text>
</comment>
<comment type="subcellular location">
    <subcellularLocation>
        <location evidence="1">Cytoplasm</location>
    </subcellularLocation>
    <text evidence="1">The tmRNA-SmpB complex associates with stalled 70S ribosomes.</text>
</comment>
<comment type="similarity">
    <text evidence="1">Belongs to the SmpB family.</text>
</comment>
<evidence type="ECO:0000255" key="1">
    <source>
        <dbReference type="HAMAP-Rule" id="MF_00023"/>
    </source>
</evidence>
<name>SSRP_RICRI</name>
<keyword id="KW-0963">Cytoplasm</keyword>
<keyword id="KW-0694">RNA-binding</keyword>
<feature type="chain" id="PRO_0000103019" description="SsrA-binding protein">
    <location>
        <begin position="1"/>
        <end position="152"/>
    </location>
</feature>
<dbReference type="EMBL" id="AJ293311">
    <property type="protein sequence ID" value="CAC33658.1"/>
    <property type="molecule type" value="Genomic_DNA"/>
</dbReference>
<dbReference type="RefSeq" id="WP_012150787.1">
    <property type="nucleotide sequence ID" value="NZ_CP114277.2"/>
</dbReference>
<dbReference type="SMR" id="Q9AKJ8"/>
<dbReference type="GeneID" id="79937340"/>
<dbReference type="OMA" id="WTNHSAR"/>
<dbReference type="GO" id="GO:0005829">
    <property type="term" value="C:cytosol"/>
    <property type="evidence" value="ECO:0007669"/>
    <property type="project" value="TreeGrafter"/>
</dbReference>
<dbReference type="GO" id="GO:0003723">
    <property type="term" value="F:RNA binding"/>
    <property type="evidence" value="ECO:0007669"/>
    <property type="project" value="UniProtKB-UniRule"/>
</dbReference>
<dbReference type="GO" id="GO:0070929">
    <property type="term" value="P:trans-translation"/>
    <property type="evidence" value="ECO:0007669"/>
    <property type="project" value="UniProtKB-UniRule"/>
</dbReference>
<dbReference type="CDD" id="cd09294">
    <property type="entry name" value="SmpB"/>
    <property type="match status" value="1"/>
</dbReference>
<dbReference type="Gene3D" id="2.40.280.10">
    <property type="match status" value="1"/>
</dbReference>
<dbReference type="HAMAP" id="MF_00023">
    <property type="entry name" value="SmpB"/>
    <property type="match status" value="1"/>
</dbReference>
<dbReference type="InterPro" id="IPR023620">
    <property type="entry name" value="SmpB"/>
</dbReference>
<dbReference type="InterPro" id="IPR000037">
    <property type="entry name" value="SsrA-bd_prot"/>
</dbReference>
<dbReference type="NCBIfam" id="NF003843">
    <property type="entry name" value="PRK05422.1"/>
    <property type="match status" value="1"/>
</dbReference>
<dbReference type="NCBIfam" id="TIGR00086">
    <property type="entry name" value="smpB"/>
    <property type="match status" value="1"/>
</dbReference>
<dbReference type="PANTHER" id="PTHR30308:SF2">
    <property type="entry name" value="SSRA-BINDING PROTEIN"/>
    <property type="match status" value="1"/>
</dbReference>
<dbReference type="PANTHER" id="PTHR30308">
    <property type="entry name" value="TMRNA-BINDING COMPONENT OF TRANS-TRANSLATION TAGGING COMPLEX"/>
    <property type="match status" value="1"/>
</dbReference>
<dbReference type="Pfam" id="PF01668">
    <property type="entry name" value="SmpB"/>
    <property type="match status" value="1"/>
</dbReference>
<dbReference type="SUPFAM" id="SSF74982">
    <property type="entry name" value="Small protein B (SmpB)"/>
    <property type="match status" value="1"/>
</dbReference>
<gene>
    <name evidence="1" type="primary">smpB</name>
</gene>
<protein>
    <recommendedName>
        <fullName evidence="1">SsrA-binding protein</fullName>
    </recommendedName>
    <alternativeName>
        <fullName evidence="1">Small protein B</fullName>
    </alternativeName>
</protein>